<comment type="function">
    <text evidence="1">An accessory protein needed during the final step in the assembly of 30S ribosomal subunit, possibly for assembly of the head region. Essential for efficient processing of 16S rRNA. May be needed both before and after RbfA during the maturation of 16S rRNA. It has affinity for free ribosomal 30S subunits but not for 70S ribosomes.</text>
</comment>
<comment type="subunit">
    <text evidence="1">Binds ribosomal protein uS19.</text>
</comment>
<comment type="subcellular location">
    <subcellularLocation>
        <location evidence="1">Cytoplasm</location>
    </subcellularLocation>
</comment>
<comment type="domain">
    <text evidence="1">The PRC barrel domain binds ribosomal protein uS19.</text>
</comment>
<comment type="similarity">
    <text evidence="1">Belongs to the RimM family.</text>
</comment>
<gene>
    <name evidence="1" type="primary">rimM</name>
    <name type="ordered locus">LPC_2945</name>
</gene>
<dbReference type="EMBL" id="CP000675">
    <property type="protein sequence ID" value="ABQ56846.1"/>
    <property type="molecule type" value="Genomic_DNA"/>
</dbReference>
<dbReference type="RefSeq" id="WP_011213051.1">
    <property type="nucleotide sequence ID" value="NZ_JAPMSS010000006.1"/>
</dbReference>
<dbReference type="SMR" id="A5IHJ6"/>
<dbReference type="KEGG" id="lpc:LPC_2945"/>
<dbReference type="HOGENOM" id="CLU_077636_1_0_6"/>
<dbReference type="GO" id="GO:0005737">
    <property type="term" value="C:cytoplasm"/>
    <property type="evidence" value="ECO:0007669"/>
    <property type="project" value="UniProtKB-SubCell"/>
</dbReference>
<dbReference type="GO" id="GO:0005840">
    <property type="term" value="C:ribosome"/>
    <property type="evidence" value="ECO:0007669"/>
    <property type="project" value="InterPro"/>
</dbReference>
<dbReference type="GO" id="GO:0043022">
    <property type="term" value="F:ribosome binding"/>
    <property type="evidence" value="ECO:0007669"/>
    <property type="project" value="InterPro"/>
</dbReference>
<dbReference type="GO" id="GO:0042274">
    <property type="term" value="P:ribosomal small subunit biogenesis"/>
    <property type="evidence" value="ECO:0007669"/>
    <property type="project" value="UniProtKB-UniRule"/>
</dbReference>
<dbReference type="GO" id="GO:0006364">
    <property type="term" value="P:rRNA processing"/>
    <property type="evidence" value="ECO:0007669"/>
    <property type="project" value="UniProtKB-UniRule"/>
</dbReference>
<dbReference type="Gene3D" id="2.30.30.240">
    <property type="entry name" value="PRC-barrel domain"/>
    <property type="match status" value="1"/>
</dbReference>
<dbReference type="Gene3D" id="2.40.30.60">
    <property type="entry name" value="RimM"/>
    <property type="match status" value="1"/>
</dbReference>
<dbReference type="HAMAP" id="MF_00014">
    <property type="entry name" value="Ribosome_mat_RimM"/>
    <property type="match status" value="1"/>
</dbReference>
<dbReference type="InterPro" id="IPR011033">
    <property type="entry name" value="PRC_barrel-like_sf"/>
</dbReference>
<dbReference type="InterPro" id="IPR056792">
    <property type="entry name" value="PRC_RimM"/>
</dbReference>
<dbReference type="InterPro" id="IPR011961">
    <property type="entry name" value="RimM"/>
</dbReference>
<dbReference type="InterPro" id="IPR002676">
    <property type="entry name" value="RimM_N"/>
</dbReference>
<dbReference type="InterPro" id="IPR036976">
    <property type="entry name" value="RimM_N_sf"/>
</dbReference>
<dbReference type="InterPro" id="IPR009000">
    <property type="entry name" value="Transl_B-barrel_sf"/>
</dbReference>
<dbReference type="NCBIfam" id="TIGR02273">
    <property type="entry name" value="16S_RimM"/>
    <property type="match status" value="1"/>
</dbReference>
<dbReference type="PANTHER" id="PTHR33692">
    <property type="entry name" value="RIBOSOME MATURATION FACTOR RIMM"/>
    <property type="match status" value="1"/>
</dbReference>
<dbReference type="PANTHER" id="PTHR33692:SF1">
    <property type="entry name" value="RIBOSOME MATURATION FACTOR RIMM"/>
    <property type="match status" value="1"/>
</dbReference>
<dbReference type="Pfam" id="PF24986">
    <property type="entry name" value="PRC_RimM"/>
    <property type="match status" value="1"/>
</dbReference>
<dbReference type="Pfam" id="PF01782">
    <property type="entry name" value="RimM"/>
    <property type="match status" value="1"/>
</dbReference>
<dbReference type="SUPFAM" id="SSF50346">
    <property type="entry name" value="PRC-barrel domain"/>
    <property type="match status" value="1"/>
</dbReference>
<dbReference type="SUPFAM" id="SSF50447">
    <property type="entry name" value="Translation proteins"/>
    <property type="match status" value="1"/>
</dbReference>
<name>RIMM_LEGPC</name>
<evidence type="ECO:0000255" key="1">
    <source>
        <dbReference type="HAMAP-Rule" id="MF_00014"/>
    </source>
</evidence>
<protein>
    <recommendedName>
        <fullName evidence="1">Ribosome maturation factor RimM</fullName>
    </recommendedName>
</protein>
<keyword id="KW-0143">Chaperone</keyword>
<keyword id="KW-0963">Cytoplasm</keyword>
<keyword id="KW-0690">Ribosome biogenesis</keyword>
<keyword id="KW-0698">rRNA processing</keyword>
<proteinExistence type="inferred from homology"/>
<organism>
    <name type="scientific">Legionella pneumophila (strain Corby)</name>
    <dbReference type="NCBI Taxonomy" id="400673"/>
    <lineage>
        <taxon>Bacteria</taxon>
        <taxon>Pseudomonadati</taxon>
        <taxon>Pseudomonadota</taxon>
        <taxon>Gammaproteobacteria</taxon>
        <taxon>Legionellales</taxon>
        <taxon>Legionellaceae</taxon>
        <taxon>Legionella</taxon>
    </lineage>
</organism>
<reference key="1">
    <citation type="submission" date="2006-11" db="EMBL/GenBank/DDBJ databases">
        <title>Identification and characterization of a new conjugation/ type IVA secretion system (trb/tra) of L. pneumophila Corby localized on a mobile genomic island.</title>
        <authorList>
            <person name="Gloeckner G."/>
            <person name="Albert-Weissenberger C."/>
            <person name="Weinmann E."/>
            <person name="Jacobi S."/>
            <person name="Schunder E."/>
            <person name="Steinert M."/>
            <person name="Buchrieser C."/>
            <person name="Hacker J."/>
            <person name="Heuner K."/>
        </authorList>
    </citation>
    <scope>NUCLEOTIDE SEQUENCE [LARGE SCALE GENOMIC DNA]</scope>
    <source>
        <strain>Corby</strain>
    </source>
</reference>
<feature type="chain" id="PRO_1000001189" description="Ribosome maturation factor RimM">
    <location>
        <begin position="1"/>
        <end position="169"/>
    </location>
</feature>
<feature type="domain" description="PRC barrel" evidence="1">
    <location>
        <begin position="97"/>
        <end position="169"/>
    </location>
</feature>
<accession>A5IHJ6</accession>
<sequence length="169" mass="19244">MNNKTNWVIIGRFGRPHGIKGFVTVHSFTDPADNILRYNDWHVFLNKQWQPLKLLTIEVRSKAIIAQIEGYPERELVSALTNLDIGVQESQLAALAPGEYYWYQLIGMSVINSKGDLFGKVVEIMPTGSNDVLVVEGEKRHLIPYLPGQFVINIDESQQVITVDWDMNF</sequence>